<name>RR15_OENGL</name>
<geneLocation type="chloroplast"/>
<gene>
    <name type="primary">rps15</name>
</gene>
<accession>B0Z5A0</accession>
<reference key="1">
    <citation type="journal article" date="2008" name="Nucleic Acids Res.">
        <title>The complete nucleotide sequences of the five genetically distinct plastid genomes of Oenothera, subsection Oenothera: I. Sequence evaluation and plastome evolution.</title>
        <authorList>
            <person name="Greiner S."/>
            <person name="Wang X."/>
            <person name="Rauwolf U."/>
            <person name="Silber M.V."/>
            <person name="Mayer K."/>
            <person name="Meurer J."/>
            <person name="Haberer G."/>
            <person name="Herrmann R.G."/>
        </authorList>
    </citation>
    <scope>NUCLEOTIDE SEQUENCE [LARGE SCALE GENOMIC DNA]</scope>
    <source>
        <strain>cv. Rr-lamarckiana Sweden</strain>
    </source>
</reference>
<feature type="chain" id="PRO_0000354272" description="Small ribosomal subunit protein uS15c">
    <location>
        <begin position="1"/>
        <end position="87"/>
    </location>
</feature>
<keyword id="KW-0150">Chloroplast</keyword>
<keyword id="KW-0934">Plastid</keyword>
<keyword id="KW-0687">Ribonucleoprotein</keyword>
<keyword id="KW-0689">Ribosomal protein</keyword>
<evidence type="ECO:0000250" key="1"/>
<evidence type="ECO:0000305" key="2"/>
<sequence>MVKNAFISVISQEENRGSVEFQVVSFTNKIRRLTSHLEFHRKDFLSQRGLRKILGKRQRLLSYLSKKDKVRYTELISQLDIRELTTR</sequence>
<dbReference type="EMBL" id="EU262890">
    <property type="protein sequence ID" value="ABX10093.1"/>
    <property type="molecule type" value="Genomic_DNA"/>
</dbReference>
<dbReference type="RefSeq" id="YP_001687339.1">
    <property type="nucleotide sequence ID" value="NC_010360.2"/>
</dbReference>
<dbReference type="SMR" id="B0Z5A0"/>
<dbReference type="GeneID" id="5955234"/>
<dbReference type="GO" id="GO:0009507">
    <property type="term" value="C:chloroplast"/>
    <property type="evidence" value="ECO:0007669"/>
    <property type="project" value="UniProtKB-SubCell"/>
</dbReference>
<dbReference type="GO" id="GO:1990904">
    <property type="term" value="C:ribonucleoprotein complex"/>
    <property type="evidence" value="ECO:0007669"/>
    <property type="project" value="UniProtKB-KW"/>
</dbReference>
<dbReference type="GO" id="GO:0005840">
    <property type="term" value="C:ribosome"/>
    <property type="evidence" value="ECO:0007669"/>
    <property type="project" value="UniProtKB-KW"/>
</dbReference>
<dbReference type="GO" id="GO:0003735">
    <property type="term" value="F:structural constituent of ribosome"/>
    <property type="evidence" value="ECO:0007669"/>
    <property type="project" value="InterPro"/>
</dbReference>
<dbReference type="GO" id="GO:0006412">
    <property type="term" value="P:translation"/>
    <property type="evidence" value="ECO:0007669"/>
    <property type="project" value="UniProtKB-UniRule"/>
</dbReference>
<dbReference type="CDD" id="cd00353">
    <property type="entry name" value="Ribosomal_S15p_S13e"/>
    <property type="match status" value="1"/>
</dbReference>
<dbReference type="Gene3D" id="1.10.287.10">
    <property type="entry name" value="S15/NS1, RNA-binding"/>
    <property type="match status" value="1"/>
</dbReference>
<dbReference type="HAMAP" id="MF_01343_B">
    <property type="entry name" value="Ribosomal_uS15_B"/>
    <property type="match status" value="1"/>
</dbReference>
<dbReference type="InterPro" id="IPR000589">
    <property type="entry name" value="Ribosomal_uS15"/>
</dbReference>
<dbReference type="InterPro" id="IPR005290">
    <property type="entry name" value="Ribosomal_uS15_bac-type"/>
</dbReference>
<dbReference type="InterPro" id="IPR009068">
    <property type="entry name" value="uS15_NS1_RNA-bd_sf"/>
</dbReference>
<dbReference type="NCBIfam" id="TIGR00952">
    <property type="entry name" value="S15_bact"/>
    <property type="match status" value="1"/>
</dbReference>
<dbReference type="PANTHER" id="PTHR23321">
    <property type="entry name" value="RIBOSOMAL PROTEIN S15, BACTERIAL AND ORGANELLAR"/>
    <property type="match status" value="1"/>
</dbReference>
<dbReference type="PANTHER" id="PTHR23321:SF26">
    <property type="entry name" value="SMALL RIBOSOMAL SUBUNIT PROTEIN US15M"/>
    <property type="match status" value="1"/>
</dbReference>
<dbReference type="Pfam" id="PF00312">
    <property type="entry name" value="Ribosomal_S15"/>
    <property type="match status" value="1"/>
</dbReference>
<dbReference type="SMART" id="SM01387">
    <property type="entry name" value="Ribosomal_S15"/>
    <property type="match status" value="1"/>
</dbReference>
<dbReference type="SUPFAM" id="SSF47060">
    <property type="entry name" value="S15/NS1 RNA-binding domain"/>
    <property type="match status" value="1"/>
</dbReference>
<dbReference type="PROSITE" id="PS00362">
    <property type="entry name" value="RIBOSOMAL_S15"/>
    <property type="match status" value="1"/>
</dbReference>
<protein>
    <recommendedName>
        <fullName evidence="2">Small ribosomal subunit protein uS15c</fullName>
    </recommendedName>
    <alternativeName>
        <fullName>30S ribosomal protein S15, chloroplastic</fullName>
    </alternativeName>
</protein>
<organism>
    <name type="scientific">Oenothera glazioviana</name>
    <name type="common">Large-flowered evening primrose</name>
    <name type="synonym">Oenothera erythrosepala</name>
    <dbReference type="NCBI Taxonomy" id="482428"/>
    <lineage>
        <taxon>Eukaryota</taxon>
        <taxon>Viridiplantae</taxon>
        <taxon>Streptophyta</taxon>
        <taxon>Embryophyta</taxon>
        <taxon>Tracheophyta</taxon>
        <taxon>Spermatophyta</taxon>
        <taxon>Magnoliopsida</taxon>
        <taxon>eudicotyledons</taxon>
        <taxon>Gunneridae</taxon>
        <taxon>Pentapetalae</taxon>
        <taxon>rosids</taxon>
        <taxon>malvids</taxon>
        <taxon>Myrtales</taxon>
        <taxon>Onagraceae</taxon>
        <taxon>Onagroideae</taxon>
        <taxon>Onagreae</taxon>
        <taxon>Oenothera</taxon>
    </lineage>
</organism>
<proteinExistence type="inferred from homology"/>
<comment type="subunit">
    <text evidence="1">Part of the 30S ribosomal subunit.</text>
</comment>
<comment type="subcellular location">
    <subcellularLocation>
        <location>Plastid</location>
        <location>Chloroplast</location>
    </subcellularLocation>
</comment>
<comment type="similarity">
    <text evidence="2">Belongs to the universal ribosomal protein uS15 family.</text>
</comment>